<sequence length="457" mass="48749">MPLSLPLHIVILAAGEGKRMKSALPKVLHPIAGKPMLAHVITTARALTPDAIHVVYGHAGNQVRAAFADQTDLHWVEQTQQLGTGHAVKQTMSAIPNAANVLVLYGDVPLIRAETLQRLPRASTPIAVLVTELANPAGYGHIVRNSEGKVAAIIEDKDADEEQRRIHTVNTGILCAESTALRRWLSKLSNTNMQGEYYLTDIFASATADLTPANMIMVTDAQEVEGVNDLWQLTQLERAWQIRAARALCLQGARVADPARLDQRGTIRIGQNVHIDIDVVLEGEIELGDNVVIGPFVRLKNVKLGPGTKVHAHCDLEGVTTTGSALIGPFARLRPETMLADGVHIGNFVETKNTSIGADSKANHLTYLGDAQIGTKVNIGAGTITCNYDGVNKSITLIGDGAFIGSHSALIAPVSVGAGATLGAGTVLTHDAPAHQLTVARARQTTLDGWQRPKKKT</sequence>
<keyword id="KW-0012">Acyltransferase</keyword>
<keyword id="KW-0133">Cell shape</keyword>
<keyword id="KW-0961">Cell wall biogenesis/degradation</keyword>
<keyword id="KW-0963">Cytoplasm</keyword>
<keyword id="KW-0460">Magnesium</keyword>
<keyword id="KW-0479">Metal-binding</keyword>
<keyword id="KW-0511">Multifunctional enzyme</keyword>
<keyword id="KW-0548">Nucleotidyltransferase</keyword>
<keyword id="KW-0573">Peptidoglycan synthesis</keyword>
<keyword id="KW-0677">Repeat</keyword>
<keyword id="KW-0808">Transferase</keyword>
<feature type="chain" id="PRO_1000186513" description="Bifunctional protein GlmU">
    <location>
        <begin position="1"/>
        <end position="457"/>
    </location>
</feature>
<feature type="region of interest" description="Pyrophosphorylase" evidence="1">
    <location>
        <begin position="1"/>
        <end position="230"/>
    </location>
</feature>
<feature type="region of interest" description="Linker" evidence="1">
    <location>
        <begin position="231"/>
        <end position="251"/>
    </location>
</feature>
<feature type="region of interest" description="N-acetyltransferase" evidence="1">
    <location>
        <begin position="252"/>
        <end position="457"/>
    </location>
</feature>
<feature type="active site" description="Proton acceptor" evidence="1">
    <location>
        <position position="364"/>
    </location>
</feature>
<feature type="binding site" evidence="1">
    <location>
        <begin position="12"/>
        <end position="15"/>
    </location>
    <ligand>
        <name>UDP-N-acetyl-alpha-D-glucosamine</name>
        <dbReference type="ChEBI" id="CHEBI:57705"/>
    </ligand>
</feature>
<feature type="binding site" evidence="1">
    <location>
        <position position="26"/>
    </location>
    <ligand>
        <name>UDP-N-acetyl-alpha-D-glucosamine</name>
        <dbReference type="ChEBI" id="CHEBI:57705"/>
    </ligand>
</feature>
<feature type="binding site" evidence="1">
    <location>
        <position position="78"/>
    </location>
    <ligand>
        <name>UDP-N-acetyl-alpha-D-glucosamine</name>
        <dbReference type="ChEBI" id="CHEBI:57705"/>
    </ligand>
</feature>
<feature type="binding site" evidence="1">
    <location>
        <begin position="83"/>
        <end position="84"/>
    </location>
    <ligand>
        <name>UDP-N-acetyl-alpha-D-glucosamine</name>
        <dbReference type="ChEBI" id="CHEBI:57705"/>
    </ligand>
</feature>
<feature type="binding site" evidence="1">
    <location>
        <begin position="105"/>
        <end position="107"/>
    </location>
    <ligand>
        <name>UDP-N-acetyl-alpha-D-glucosamine</name>
        <dbReference type="ChEBI" id="CHEBI:57705"/>
    </ligand>
</feature>
<feature type="binding site" evidence="1">
    <location>
        <position position="107"/>
    </location>
    <ligand>
        <name>Mg(2+)</name>
        <dbReference type="ChEBI" id="CHEBI:18420"/>
    </ligand>
</feature>
<feature type="binding site" evidence="1">
    <location>
        <position position="140"/>
    </location>
    <ligand>
        <name>UDP-N-acetyl-alpha-D-glucosamine</name>
        <dbReference type="ChEBI" id="CHEBI:57705"/>
    </ligand>
</feature>
<feature type="binding site" evidence="1">
    <location>
        <position position="155"/>
    </location>
    <ligand>
        <name>UDP-N-acetyl-alpha-D-glucosamine</name>
        <dbReference type="ChEBI" id="CHEBI:57705"/>
    </ligand>
</feature>
<feature type="binding site" evidence="1">
    <location>
        <position position="170"/>
    </location>
    <ligand>
        <name>UDP-N-acetyl-alpha-D-glucosamine</name>
        <dbReference type="ChEBI" id="CHEBI:57705"/>
    </ligand>
</feature>
<feature type="binding site" evidence="1">
    <location>
        <position position="228"/>
    </location>
    <ligand>
        <name>Mg(2+)</name>
        <dbReference type="ChEBI" id="CHEBI:18420"/>
    </ligand>
</feature>
<feature type="binding site" evidence="1">
    <location>
        <position position="228"/>
    </location>
    <ligand>
        <name>UDP-N-acetyl-alpha-D-glucosamine</name>
        <dbReference type="ChEBI" id="CHEBI:57705"/>
    </ligand>
</feature>
<feature type="binding site" evidence="1">
    <location>
        <position position="334"/>
    </location>
    <ligand>
        <name>UDP-N-acetyl-alpha-D-glucosamine</name>
        <dbReference type="ChEBI" id="CHEBI:57705"/>
    </ligand>
</feature>
<feature type="binding site" evidence="1">
    <location>
        <position position="352"/>
    </location>
    <ligand>
        <name>UDP-N-acetyl-alpha-D-glucosamine</name>
        <dbReference type="ChEBI" id="CHEBI:57705"/>
    </ligand>
</feature>
<feature type="binding site" evidence="1">
    <location>
        <position position="367"/>
    </location>
    <ligand>
        <name>UDP-N-acetyl-alpha-D-glucosamine</name>
        <dbReference type="ChEBI" id="CHEBI:57705"/>
    </ligand>
</feature>
<feature type="binding site" evidence="1">
    <location>
        <position position="378"/>
    </location>
    <ligand>
        <name>UDP-N-acetyl-alpha-D-glucosamine</name>
        <dbReference type="ChEBI" id="CHEBI:57705"/>
    </ligand>
</feature>
<feature type="binding site" evidence="1">
    <location>
        <position position="381"/>
    </location>
    <ligand>
        <name>acetyl-CoA</name>
        <dbReference type="ChEBI" id="CHEBI:57288"/>
    </ligand>
</feature>
<feature type="binding site" evidence="1">
    <location>
        <begin position="387"/>
        <end position="388"/>
    </location>
    <ligand>
        <name>acetyl-CoA</name>
        <dbReference type="ChEBI" id="CHEBI:57288"/>
    </ligand>
</feature>
<feature type="binding site" evidence="1">
    <location>
        <position position="406"/>
    </location>
    <ligand>
        <name>acetyl-CoA</name>
        <dbReference type="ChEBI" id="CHEBI:57288"/>
    </ligand>
</feature>
<feature type="binding site" evidence="1">
    <location>
        <position position="424"/>
    </location>
    <ligand>
        <name>acetyl-CoA</name>
        <dbReference type="ChEBI" id="CHEBI:57288"/>
    </ligand>
</feature>
<feature type="binding site" evidence="1">
    <location>
        <position position="441"/>
    </location>
    <ligand>
        <name>acetyl-CoA</name>
        <dbReference type="ChEBI" id="CHEBI:57288"/>
    </ligand>
</feature>
<evidence type="ECO:0000255" key="1">
    <source>
        <dbReference type="HAMAP-Rule" id="MF_01631"/>
    </source>
</evidence>
<dbReference type="EC" id="2.7.7.23" evidence="1"/>
<dbReference type="EC" id="2.3.1.157" evidence="1"/>
<dbReference type="EMBL" id="CP001011">
    <property type="protein sequence ID" value="ACB91868.1"/>
    <property type="molecule type" value="Genomic_DNA"/>
</dbReference>
<dbReference type="SMR" id="B2I874"/>
<dbReference type="KEGG" id="xfn:XfasM23_0421"/>
<dbReference type="HOGENOM" id="CLU_029499_15_2_6"/>
<dbReference type="UniPathway" id="UPA00113">
    <property type="reaction ID" value="UER00532"/>
</dbReference>
<dbReference type="UniPathway" id="UPA00113">
    <property type="reaction ID" value="UER00533"/>
</dbReference>
<dbReference type="UniPathway" id="UPA00973"/>
<dbReference type="Proteomes" id="UP000001698">
    <property type="component" value="Chromosome"/>
</dbReference>
<dbReference type="GO" id="GO:0005737">
    <property type="term" value="C:cytoplasm"/>
    <property type="evidence" value="ECO:0007669"/>
    <property type="project" value="UniProtKB-SubCell"/>
</dbReference>
<dbReference type="GO" id="GO:0016020">
    <property type="term" value="C:membrane"/>
    <property type="evidence" value="ECO:0007669"/>
    <property type="project" value="GOC"/>
</dbReference>
<dbReference type="GO" id="GO:0019134">
    <property type="term" value="F:glucosamine-1-phosphate N-acetyltransferase activity"/>
    <property type="evidence" value="ECO:0007669"/>
    <property type="project" value="UniProtKB-UniRule"/>
</dbReference>
<dbReference type="GO" id="GO:0000287">
    <property type="term" value="F:magnesium ion binding"/>
    <property type="evidence" value="ECO:0007669"/>
    <property type="project" value="UniProtKB-UniRule"/>
</dbReference>
<dbReference type="GO" id="GO:0003977">
    <property type="term" value="F:UDP-N-acetylglucosamine diphosphorylase activity"/>
    <property type="evidence" value="ECO:0007669"/>
    <property type="project" value="UniProtKB-UniRule"/>
</dbReference>
<dbReference type="GO" id="GO:0000902">
    <property type="term" value="P:cell morphogenesis"/>
    <property type="evidence" value="ECO:0007669"/>
    <property type="project" value="UniProtKB-UniRule"/>
</dbReference>
<dbReference type="GO" id="GO:0071555">
    <property type="term" value="P:cell wall organization"/>
    <property type="evidence" value="ECO:0007669"/>
    <property type="project" value="UniProtKB-KW"/>
</dbReference>
<dbReference type="GO" id="GO:0009245">
    <property type="term" value="P:lipid A biosynthetic process"/>
    <property type="evidence" value="ECO:0007669"/>
    <property type="project" value="UniProtKB-UniRule"/>
</dbReference>
<dbReference type="GO" id="GO:0009252">
    <property type="term" value="P:peptidoglycan biosynthetic process"/>
    <property type="evidence" value="ECO:0007669"/>
    <property type="project" value="UniProtKB-UniRule"/>
</dbReference>
<dbReference type="GO" id="GO:0008360">
    <property type="term" value="P:regulation of cell shape"/>
    <property type="evidence" value="ECO:0007669"/>
    <property type="project" value="UniProtKB-KW"/>
</dbReference>
<dbReference type="GO" id="GO:0006048">
    <property type="term" value="P:UDP-N-acetylglucosamine biosynthetic process"/>
    <property type="evidence" value="ECO:0007669"/>
    <property type="project" value="UniProtKB-UniPathway"/>
</dbReference>
<dbReference type="CDD" id="cd02540">
    <property type="entry name" value="GT2_GlmU_N_bac"/>
    <property type="match status" value="1"/>
</dbReference>
<dbReference type="CDD" id="cd03353">
    <property type="entry name" value="LbH_GlmU_C"/>
    <property type="match status" value="1"/>
</dbReference>
<dbReference type="Gene3D" id="2.160.10.10">
    <property type="entry name" value="Hexapeptide repeat proteins"/>
    <property type="match status" value="1"/>
</dbReference>
<dbReference type="Gene3D" id="3.90.550.10">
    <property type="entry name" value="Spore Coat Polysaccharide Biosynthesis Protein SpsA, Chain A"/>
    <property type="match status" value="1"/>
</dbReference>
<dbReference type="HAMAP" id="MF_01631">
    <property type="entry name" value="GlmU"/>
    <property type="match status" value="1"/>
</dbReference>
<dbReference type="InterPro" id="IPR005882">
    <property type="entry name" value="Bifunctional_GlmU"/>
</dbReference>
<dbReference type="InterPro" id="IPR050065">
    <property type="entry name" value="GlmU-like"/>
</dbReference>
<dbReference type="InterPro" id="IPR038009">
    <property type="entry name" value="GlmU_C_LbH"/>
</dbReference>
<dbReference type="InterPro" id="IPR001451">
    <property type="entry name" value="Hexapep"/>
</dbReference>
<dbReference type="InterPro" id="IPR025877">
    <property type="entry name" value="MobA-like_NTP_Trfase"/>
</dbReference>
<dbReference type="InterPro" id="IPR029044">
    <property type="entry name" value="Nucleotide-diphossugar_trans"/>
</dbReference>
<dbReference type="InterPro" id="IPR011004">
    <property type="entry name" value="Trimer_LpxA-like_sf"/>
</dbReference>
<dbReference type="NCBIfam" id="TIGR01173">
    <property type="entry name" value="glmU"/>
    <property type="match status" value="1"/>
</dbReference>
<dbReference type="PANTHER" id="PTHR43584:SF3">
    <property type="entry name" value="BIFUNCTIONAL PROTEIN GLMU"/>
    <property type="match status" value="1"/>
</dbReference>
<dbReference type="PANTHER" id="PTHR43584">
    <property type="entry name" value="NUCLEOTIDYL TRANSFERASE"/>
    <property type="match status" value="1"/>
</dbReference>
<dbReference type="Pfam" id="PF00132">
    <property type="entry name" value="Hexapep"/>
    <property type="match status" value="2"/>
</dbReference>
<dbReference type="Pfam" id="PF12804">
    <property type="entry name" value="NTP_transf_3"/>
    <property type="match status" value="1"/>
</dbReference>
<dbReference type="SUPFAM" id="SSF53448">
    <property type="entry name" value="Nucleotide-diphospho-sugar transferases"/>
    <property type="match status" value="1"/>
</dbReference>
<dbReference type="SUPFAM" id="SSF51161">
    <property type="entry name" value="Trimeric LpxA-like enzymes"/>
    <property type="match status" value="1"/>
</dbReference>
<organism>
    <name type="scientific">Xylella fastidiosa (strain M23)</name>
    <dbReference type="NCBI Taxonomy" id="405441"/>
    <lineage>
        <taxon>Bacteria</taxon>
        <taxon>Pseudomonadati</taxon>
        <taxon>Pseudomonadota</taxon>
        <taxon>Gammaproteobacteria</taxon>
        <taxon>Lysobacterales</taxon>
        <taxon>Lysobacteraceae</taxon>
        <taxon>Xylella</taxon>
    </lineage>
</organism>
<accession>B2I874</accession>
<protein>
    <recommendedName>
        <fullName evidence="1">Bifunctional protein GlmU</fullName>
    </recommendedName>
    <domain>
        <recommendedName>
            <fullName evidence="1">UDP-N-acetylglucosamine pyrophosphorylase</fullName>
            <ecNumber evidence="1">2.7.7.23</ecNumber>
        </recommendedName>
        <alternativeName>
            <fullName evidence="1">N-acetylglucosamine-1-phosphate uridyltransferase</fullName>
        </alternativeName>
    </domain>
    <domain>
        <recommendedName>
            <fullName evidence="1">Glucosamine-1-phosphate N-acetyltransferase</fullName>
            <ecNumber evidence="1">2.3.1.157</ecNumber>
        </recommendedName>
    </domain>
</protein>
<reference key="1">
    <citation type="journal article" date="2010" name="J. Bacteriol.">
        <title>Whole genome sequences of two Xylella fastidiosa strains (M12 and M23) causing almond leaf scorch disease in California.</title>
        <authorList>
            <person name="Chen J."/>
            <person name="Xie G."/>
            <person name="Han S."/>
            <person name="Chertkov O."/>
            <person name="Sims D."/>
            <person name="Civerolo E.L."/>
        </authorList>
    </citation>
    <scope>NUCLEOTIDE SEQUENCE [LARGE SCALE GENOMIC DNA]</scope>
    <source>
        <strain>M23</strain>
    </source>
</reference>
<comment type="function">
    <text evidence="1">Catalyzes the last two sequential reactions in the de novo biosynthetic pathway for UDP-N-acetylglucosamine (UDP-GlcNAc). The C-terminal domain catalyzes the transfer of acetyl group from acetyl coenzyme A to glucosamine-1-phosphate (GlcN-1-P) to produce N-acetylglucosamine-1-phosphate (GlcNAc-1-P), which is converted into UDP-GlcNAc by the transfer of uridine 5-monophosphate (from uridine 5-triphosphate), a reaction catalyzed by the N-terminal domain.</text>
</comment>
<comment type="catalytic activity">
    <reaction evidence="1">
        <text>alpha-D-glucosamine 1-phosphate + acetyl-CoA = N-acetyl-alpha-D-glucosamine 1-phosphate + CoA + H(+)</text>
        <dbReference type="Rhea" id="RHEA:13725"/>
        <dbReference type="ChEBI" id="CHEBI:15378"/>
        <dbReference type="ChEBI" id="CHEBI:57287"/>
        <dbReference type="ChEBI" id="CHEBI:57288"/>
        <dbReference type="ChEBI" id="CHEBI:57776"/>
        <dbReference type="ChEBI" id="CHEBI:58516"/>
        <dbReference type="EC" id="2.3.1.157"/>
    </reaction>
</comment>
<comment type="catalytic activity">
    <reaction evidence="1">
        <text>N-acetyl-alpha-D-glucosamine 1-phosphate + UTP + H(+) = UDP-N-acetyl-alpha-D-glucosamine + diphosphate</text>
        <dbReference type="Rhea" id="RHEA:13509"/>
        <dbReference type="ChEBI" id="CHEBI:15378"/>
        <dbReference type="ChEBI" id="CHEBI:33019"/>
        <dbReference type="ChEBI" id="CHEBI:46398"/>
        <dbReference type="ChEBI" id="CHEBI:57705"/>
        <dbReference type="ChEBI" id="CHEBI:57776"/>
        <dbReference type="EC" id="2.7.7.23"/>
    </reaction>
</comment>
<comment type="cofactor">
    <cofactor evidence="1">
        <name>Mg(2+)</name>
        <dbReference type="ChEBI" id="CHEBI:18420"/>
    </cofactor>
    <text evidence="1">Binds 1 Mg(2+) ion per subunit.</text>
</comment>
<comment type="pathway">
    <text evidence="1">Nucleotide-sugar biosynthesis; UDP-N-acetyl-alpha-D-glucosamine biosynthesis; N-acetyl-alpha-D-glucosamine 1-phosphate from alpha-D-glucosamine 6-phosphate (route II): step 2/2.</text>
</comment>
<comment type="pathway">
    <text evidence="1">Nucleotide-sugar biosynthesis; UDP-N-acetyl-alpha-D-glucosamine biosynthesis; UDP-N-acetyl-alpha-D-glucosamine from N-acetyl-alpha-D-glucosamine 1-phosphate: step 1/1.</text>
</comment>
<comment type="pathway">
    <text evidence="1">Bacterial outer membrane biogenesis; LPS lipid A biosynthesis.</text>
</comment>
<comment type="subunit">
    <text evidence="1">Homotrimer.</text>
</comment>
<comment type="subcellular location">
    <subcellularLocation>
        <location evidence="1">Cytoplasm</location>
    </subcellularLocation>
</comment>
<comment type="similarity">
    <text evidence="1">In the N-terminal section; belongs to the N-acetylglucosamine-1-phosphate uridyltransferase family.</text>
</comment>
<comment type="similarity">
    <text evidence="1">In the C-terminal section; belongs to the transferase hexapeptide repeat family.</text>
</comment>
<name>GLMU_XYLF2</name>
<proteinExistence type="inferred from homology"/>
<gene>
    <name evidence="1" type="primary">glmU</name>
    <name type="ordered locus">XfasM23_0421</name>
</gene>